<dbReference type="EC" id="1.14.11.-" evidence="1"/>
<dbReference type="EMBL" id="CP003229">
    <property type="protein sequence ID" value="AEW98880.1"/>
    <property type="molecule type" value="Genomic_DNA"/>
</dbReference>
<dbReference type="RefSeq" id="WP_014151498.1">
    <property type="nucleotide sequence ID" value="NC_016113.1"/>
</dbReference>
<dbReference type="SMR" id="F8JJ27"/>
<dbReference type="KEGG" id="sct:SCAT_p1049"/>
<dbReference type="KEGG" id="scy:SCATT_p06870"/>
<dbReference type="PATRIC" id="fig|1003195.11.peg.1007"/>
<dbReference type="HOGENOM" id="CLU_072365_1_0_11"/>
<dbReference type="OrthoDB" id="6532393at2"/>
<dbReference type="Proteomes" id="UP000007842">
    <property type="component" value="Plasmid pSCATT"/>
</dbReference>
<dbReference type="GO" id="GO:0062148">
    <property type="term" value="F:L-gamma-glutamyl-L-propargylglycine hydroxylase activity"/>
    <property type="evidence" value="ECO:0000314"/>
    <property type="project" value="UniProtKB"/>
</dbReference>
<dbReference type="GO" id="GO:0017000">
    <property type="term" value="P:antibiotic biosynthetic process"/>
    <property type="evidence" value="ECO:0007669"/>
    <property type="project" value="UniProtKB-KW"/>
</dbReference>
<dbReference type="GO" id="GO:0062142">
    <property type="term" value="P:L-beta-ethynylserine biosynthetic process"/>
    <property type="evidence" value="ECO:0000315"/>
    <property type="project" value="UniProtKB"/>
</dbReference>
<dbReference type="InterPro" id="IPR055091">
    <property type="entry name" value="WelO5-like"/>
</dbReference>
<dbReference type="Pfam" id="PF22814">
    <property type="entry name" value="WelO5"/>
    <property type="match status" value="1"/>
</dbReference>
<dbReference type="SUPFAM" id="SSF51197">
    <property type="entry name" value="Clavaminate synthase-like"/>
    <property type="match status" value="1"/>
</dbReference>
<evidence type="ECO:0000269" key="1">
    <source>
    </source>
</evidence>
<evidence type="ECO:0000303" key="2">
    <source>
    </source>
</evidence>
<evidence type="ECO:0000305" key="3">
    <source>
    </source>
</evidence>
<evidence type="ECO:0000312" key="4">
    <source>
        <dbReference type="EMBL" id="AEW98880.1"/>
    </source>
</evidence>
<organism>
    <name type="scientific">Streptantibioticus cattleyicolor (strain ATCC 35852 / DSM 46488 / JCM 4925 / NBRC 14057 / NRRL 8057)</name>
    <name type="common">Streptomyces cattleya</name>
    <dbReference type="NCBI Taxonomy" id="1003195"/>
    <lineage>
        <taxon>Bacteria</taxon>
        <taxon>Bacillati</taxon>
        <taxon>Actinomycetota</taxon>
        <taxon>Actinomycetes</taxon>
        <taxon>Kitasatosporales</taxon>
        <taxon>Streptomycetaceae</taxon>
        <taxon>Streptantibioticus</taxon>
    </lineage>
</organism>
<comment type="function">
    <text evidence="1">Involved in the biosynthesis of terminal alkyne-containing amino acids such as L-beta-ethynylserine, that are produced as antibiotics by S.cattleya. Catalyzes the hydroxylation of the dipeptide L-gamma-glutamyl-L-propargylglycine, leading to L-gamma-glutamyl-L-beta-ethynylserine. Cannot use L-propargylglycine as substrate.</text>
</comment>
<comment type="catalytic activity">
    <reaction evidence="1">
        <text>L-gamma-glutamyl-L-propargylglycine + 2-oxoglutarate + O2 = L-gamma-glutamyl-(3R)-L-beta-ethynylserine + succinate + CO2</text>
        <dbReference type="Rhea" id="RHEA:59900"/>
        <dbReference type="ChEBI" id="CHEBI:15379"/>
        <dbReference type="ChEBI" id="CHEBI:16526"/>
        <dbReference type="ChEBI" id="CHEBI:16810"/>
        <dbReference type="ChEBI" id="CHEBI:30031"/>
        <dbReference type="ChEBI" id="CHEBI:143286"/>
        <dbReference type="ChEBI" id="CHEBI:143287"/>
    </reaction>
    <physiologicalReaction direction="left-to-right" evidence="1">
        <dbReference type="Rhea" id="RHEA:59901"/>
    </physiologicalReaction>
</comment>
<comment type="cofactor">
    <cofactor evidence="3">
        <name>Fe(2+)</name>
        <dbReference type="ChEBI" id="CHEBI:29033"/>
    </cofactor>
</comment>
<comment type="pathway">
    <text evidence="1">Amino-acid metabolism.</text>
</comment>
<comment type="pathway">
    <text evidence="1">Antibiotic biosynthesis.</text>
</comment>
<comment type="disruption phenotype">
    <text evidence="1">Cells lacking this gene still produce L-propargylglycine but not L-beta-ethynylserine, that are terminal alkyne-containing amino acids produced by wild-type S.cattleya.</text>
</comment>
<sequence>MSGTTHHHATFPAVEAAAFTRRHLDDLAAGLLGTVRVPGFFGRPALDTMLTSLHRVPVVSFDLDRMHHPMARFGTALNDYRTPELALDADRYWHDADTARRQWAGIGMTPDPLELALDALGRAWGVRPAPATIGGRPAFVGMLREVNDGTFIHYDDINREYRGGLFDQKIVAQLAFNAWLAAPREGGTTTVWRHRWEPADENRRHGYGFQPTAVADDPYVTVAPAAGDALLFNANNYHVVHPGAPGQRRIALACFLGVTAGGELVVWS</sequence>
<name>BESE_STREN</name>
<proteinExistence type="evidence at protein level"/>
<accession>F8JJ27</accession>
<accession>G8XHD4</accession>
<reference key="1">
    <citation type="submission" date="2011-12" db="EMBL/GenBank/DDBJ databases">
        <title>Complete genome sequence of Streptomyces cattleya strain DSM 46488.</title>
        <authorList>
            <person name="Ou H.-Y."/>
            <person name="Li P."/>
            <person name="Zhao C."/>
            <person name="O'Hagan D."/>
            <person name="Deng Z."/>
        </authorList>
    </citation>
    <scope>NUCLEOTIDE SEQUENCE [LARGE SCALE GENOMIC DNA]</scope>
    <source>
        <strain>ATCC 35852 / DSM 46488 / JCM 4925 / NBRC 14057 / NCIMB 11928 / NRRL 8057 / MA-4297</strain>
    </source>
</reference>
<reference key="2">
    <citation type="journal article" date="2019" name="Nature">
        <title>Discovery of a pathway for terminal-alkyne amino acid biosynthesis.</title>
        <authorList>
            <person name="Marchand J.A."/>
            <person name="Neugebauer M.E."/>
            <person name="Ing M.C."/>
            <person name="Lin C.I."/>
            <person name="Pelton J.G."/>
            <person name="Chang M.C.Y."/>
        </authorList>
    </citation>
    <scope>FUNCTION</scope>
    <scope>CATALYTIC ACTIVITY</scope>
    <scope>COFACTOR</scope>
    <scope>SUBSTRATE SPECIFICITY</scope>
    <scope>PATHWAY</scope>
    <scope>DISRUPTION PHENOTYPE</scope>
    <source>
        <strain>ATCC 35852 / DSM 46488 / JCM 4925 / NBRC 14057 / NCIMB 11928 / NRRL 8057 / MA-4297</strain>
    </source>
</reference>
<protein>
    <recommendedName>
        <fullName evidence="3">L-gamma-glutamyl-L-propargylglycine hydroxylase</fullName>
        <ecNumber evidence="1">1.14.11.-</ecNumber>
    </recommendedName>
</protein>
<geneLocation type="plasmid">
    <name>pSCATT</name>
</geneLocation>
<gene>
    <name evidence="2" type="primary">besE</name>
    <name evidence="4" type="ordered locus">SCATT_p06870</name>
</gene>
<feature type="chain" id="PRO_0000447351" description="L-gamma-glutamyl-L-propargylglycine hydroxylase">
    <location>
        <begin position="1"/>
        <end position="268"/>
    </location>
</feature>
<keyword id="KW-0028">Amino-acid biosynthesis</keyword>
<keyword id="KW-0045">Antibiotic biosynthesis</keyword>
<keyword id="KW-0223">Dioxygenase</keyword>
<keyword id="KW-0408">Iron</keyword>
<keyword id="KW-0560">Oxidoreductase</keyword>
<keyword id="KW-0614">Plasmid</keyword>
<keyword id="KW-1185">Reference proteome</keyword>